<name>ESPI_MYCTO</name>
<evidence type="ECO:0000250" key="1">
    <source>
        <dbReference type="UniProtKB" id="P9WJC5"/>
    </source>
</evidence>
<evidence type="ECO:0000256" key="2">
    <source>
        <dbReference type="SAM" id="MobiDB-lite"/>
    </source>
</evidence>
<organism>
    <name type="scientific">Mycobacterium tuberculosis (strain CDC 1551 / Oshkosh)</name>
    <dbReference type="NCBI Taxonomy" id="83331"/>
    <lineage>
        <taxon>Bacteria</taxon>
        <taxon>Bacillati</taxon>
        <taxon>Actinomycetota</taxon>
        <taxon>Actinomycetes</taxon>
        <taxon>Mycobacteriales</taxon>
        <taxon>Mycobacteriaceae</taxon>
        <taxon>Mycobacterium</taxon>
        <taxon>Mycobacterium tuberculosis complex</taxon>
    </lineage>
</organism>
<gene>
    <name evidence="1" type="primary">espI</name>
    <name type="ordered locus">MT3990</name>
</gene>
<accession>P9WJC4</accession>
<accession>L0TH05</accession>
<accession>O69740</accession>
<accession>Q7D4P3</accession>
<dbReference type="EMBL" id="AE000516">
    <property type="protein sequence ID" value="AAK48358.1"/>
    <property type="molecule type" value="Genomic_DNA"/>
</dbReference>
<dbReference type="PIR" id="B70803">
    <property type="entry name" value="B70803"/>
</dbReference>
<dbReference type="SMR" id="P9WJC4"/>
<dbReference type="KEGG" id="mtc:MT3990"/>
<dbReference type="HOGENOM" id="CLU_495924_0_0_11"/>
<dbReference type="Proteomes" id="UP000001020">
    <property type="component" value="Chromosome"/>
</dbReference>
<dbReference type="GO" id="GO:0009898">
    <property type="term" value="C:cytoplasmic side of plasma membrane"/>
    <property type="evidence" value="ECO:0007669"/>
    <property type="project" value="TreeGrafter"/>
</dbReference>
<dbReference type="GO" id="GO:0005829">
    <property type="term" value="C:cytosol"/>
    <property type="evidence" value="ECO:0007669"/>
    <property type="project" value="TreeGrafter"/>
</dbReference>
<dbReference type="GO" id="GO:0005524">
    <property type="term" value="F:ATP binding"/>
    <property type="evidence" value="ECO:0007669"/>
    <property type="project" value="UniProtKB-KW"/>
</dbReference>
<dbReference type="GO" id="GO:0016887">
    <property type="term" value="F:ATP hydrolysis activity"/>
    <property type="evidence" value="ECO:0007669"/>
    <property type="project" value="TreeGrafter"/>
</dbReference>
<dbReference type="GO" id="GO:0051782">
    <property type="term" value="P:negative regulation of cell division"/>
    <property type="evidence" value="ECO:0007669"/>
    <property type="project" value="TreeGrafter"/>
</dbReference>
<dbReference type="FunFam" id="3.40.50.300:FF:002904">
    <property type="entry name" value="Type VII secretion system ESX-1 associated protein EspI"/>
    <property type="match status" value="1"/>
</dbReference>
<dbReference type="Gene3D" id="3.40.50.300">
    <property type="entry name" value="P-loop containing nucleotide triphosphate hydrolases"/>
    <property type="match status" value="1"/>
</dbReference>
<dbReference type="InterPro" id="IPR002586">
    <property type="entry name" value="CobQ/CobB/MinD/ParA_Nub-bd_dom"/>
</dbReference>
<dbReference type="InterPro" id="IPR027417">
    <property type="entry name" value="P-loop_NTPase"/>
</dbReference>
<dbReference type="InterPro" id="IPR050625">
    <property type="entry name" value="ParA/MinD_ATPase"/>
</dbReference>
<dbReference type="PANTHER" id="PTHR43384:SF14">
    <property type="entry name" value="ESX-1 SECRETION-ASSOCIATED PROTEIN ESPI"/>
    <property type="match status" value="1"/>
</dbReference>
<dbReference type="PANTHER" id="PTHR43384">
    <property type="entry name" value="SEPTUM SITE-DETERMINING PROTEIN MIND HOMOLOG, CHLOROPLASTIC-RELATED"/>
    <property type="match status" value="1"/>
</dbReference>
<dbReference type="Pfam" id="PF01656">
    <property type="entry name" value="CbiA"/>
    <property type="match status" value="1"/>
</dbReference>
<dbReference type="SUPFAM" id="SSF52540">
    <property type="entry name" value="P-loop containing nucleoside triphosphate hydrolases"/>
    <property type="match status" value="1"/>
</dbReference>
<comment type="function">
    <text evidence="1">Required to repress ESX-1-mediated secretion under low ATP conditions. This function requires the ATP-binding motif.</text>
</comment>
<sequence>MAADYDKLFRPHEGMEAPDDMAAQPFFDPSASFPPAPASANLPKPNGQTPPPTSDDLSERFVSAPPPPPPPPPPPPPTPMPIAAGEPPSPEPAASKPPTPPMPIAGPEPAPPKPPTPPMPIAGPEPAPPKPPTPPMPIAGPAPTPTESQLAPPRPPTPQTPTGAPQQPESPAPHVPSHGPHQPRRTAPAPPWAKMPIGEPPPAPSRPSASPAEPPTRPAPQHSRRARRGHRYRTDTERNVGKVATGPSIQARLRAEEASGAQLAPGTEPSPAPLGQPRSYLAPPTRPAPTEPPPSPSPQRNSGRRAERRVHPDLAAQHAAAQPDSITAATTGGRRRKRAAPDLDATQKSLRPAAKGPKVKKVKPQKPKATKPPKVVSQRGWRHWVHALTRINLGLSPDEKYELDLHARVRRNPRGSYQIAVVGLKGGAGKTTLTAALGSTLAQVRADRILALDADPGAGNLADRVGRQSGATIADVLAEKELSHYNDIRAHTSVNAVNLEVLPAPEYSSAQRALSDADWHFIADPASRFYNLVLADCGAGFFDPLTRGVLSTVSGVVVVASVSIDGAQQASVALDWLRNNGYQDLASRACVVINHIMPGEPNVAVKDLVRHFEQQVQPGRVVVMPWDRHIAAGTEISLDLLDPIYKRKVLELAAALSDDFERAGRR</sequence>
<proteinExistence type="inferred from homology"/>
<feature type="chain" id="PRO_0000427854" description="ESX-1 secretion-associated protein EspI">
    <location>
        <begin position="1"/>
        <end position="666"/>
    </location>
</feature>
<feature type="region of interest" description="Disordered" evidence="2">
    <location>
        <begin position="1"/>
        <end position="378"/>
    </location>
</feature>
<feature type="compositionally biased region" description="Basic and acidic residues" evidence="2">
    <location>
        <begin position="1"/>
        <end position="15"/>
    </location>
</feature>
<feature type="compositionally biased region" description="Low complexity" evidence="2">
    <location>
        <begin position="22"/>
        <end position="31"/>
    </location>
</feature>
<feature type="compositionally biased region" description="Pro residues" evidence="2">
    <location>
        <begin position="64"/>
        <end position="80"/>
    </location>
</feature>
<feature type="compositionally biased region" description="Pro residues" evidence="2">
    <location>
        <begin position="87"/>
        <end position="144"/>
    </location>
</feature>
<feature type="compositionally biased region" description="Pro residues" evidence="2">
    <location>
        <begin position="188"/>
        <end position="205"/>
    </location>
</feature>
<feature type="compositionally biased region" description="Basic residues" evidence="2">
    <location>
        <begin position="222"/>
        <end position="231"/>
    </location>
</feature>
<feature type="compositionally biased region" description="Pro residues" evidence="2">
    <location>
        <begin position="284"/>
        <end position="297"/>
    </location>
</feature>
<feature type="compositionally biased region" description="Basic residues" evidence="2">
    <location>
        <begin position="357"/>
        <end position="371"/>
    </location>
</feature>
<feature type="binding site" evidence="1">
    <location>
        <begin position="424"/>
        <end position="431"/>
    </location>
    <ligand>
        <name>ATP</name>
        <dbReference type="ChEBI" id="CHEBI:30616"/>
    </ligand>
</feature>
<protein>
    <recommendedName>
        <fullName evidence="1">ESX-1 secretion-associated protein EspI</fullName>
    </recommendedName>
</protein>
<keyword id="KW-0067">ATP-binding</keyword>
<keyword id="KW-0547">Nucleotide-binding</keyword>
<keyword id="KW-1185">Reference proteome</keyword>
<reference key="1">
    <citation type="journal article" date="2002" name="J. Bacteriol.">
        <title>Whole-genome comparison of Mycobacterium tuberculosis clinical and laboratory strains.</title>
        <authorList>
            <person name="Fleischmann R.D."/>
            <person name="Alland D."/>
            <person name="Eisen J.A."/>
            <person name="Carpenter L."/>
            <person name="White O."/>
            <person name="Peterson J.D."/>
            <person name="DeBoy R.T."/>
            <person name="Dodson R.J."/>
            <person name="Gwinn M.L."/>
            <person name="Haft D.H."/>
            <person name="Hickey E.K."/>
            <person name="Kolonay J.F."/>
            <person name="Nelson W.C."/>
            <person name="Umayam L.A."/>
            <person name="Ermolaeva M.D."/>
            <person name="Salzberg S.L."/>
            <person name="Delcher A."/>
            <person name="Utterback T.R."/>
            <person name="Weidman J.F."/>
            <person name="Khouri H.M."/>
            <person name="Gill J."/>
            <person name="Mikula A."/>
            <person name="Bishai W."/>
            <person name="Jacobs W.R. Jr."/>
            <person name="Venter J.C."/>
            <person name="Fraser C.M."/>
        </authorList>
    </citation>
    <scope>NUCLEOTIDE SEQUENCE [LARGE SCALE GENOMIC DNA]</scope>
    <source>
        <strain>CDC 1551 / Oshkosh</strain>
    </source>
</reference>